<accession>Q0A7A1</accession>
<gene>
    <name evidence="1" type="primary">pnp</name>
    <name type="ordered locus">Mlg_1944</name>
</gene>
<protein>
    <recommendedName>
        <fullName evidence="1">Polyribonucleotide nucleotidyltransferase</fullName>
        <ecNumber evidence="1">2.7.7.8</ecNumber>
    </recommendedName>
    <alternativeName>
        <fullName evidence="1">Polynucleotide phosphorylase</fullName>
        <shortName evidence="1">PNPase</shortName>
    </alternativeName>
</protein>
<feature type="chain" id="PRO_0000329490" description="Polyribonucleotide nucleotidyltransferase">
    <location>
        <begin position="1"/>
        <end position="698"/>
    </location>
</feature>
<feature type="domain" description="KH" evidence="1">
    <location>
        <begin position="555"/>
        <end position="614"/>
    </location>
</feature>
<feature type="domain" description="S1 motif" evidence="1">
    <location>
        <begin position="624"/>
        <end position="692"/>
    </location>
</feature>
<feature type="binding site" evidence="1">
    <location>
        <position position="488"/>
    </location>
    <ligand>
        <name>Mg(2+)</name>
        <dbReference type="ChEBI" id="CHEBI:18420"/>
    </ligand>
</feature>
<feature type="binding site" evidence="1">
    <location>
        <position position="494"/>
    </location>
    <ligand>
        <name>Mg(2+)</name>
        <dbReference type="ChEBI" id="CHEBI:18420"/>
    </ligand>
</feature>
<comment type="function">
    <text evidence="1">Involved in mRNA degradation. Catalyzes the phosphorolysis of single-stranded polyribonucleotides processively in the 3'- to 5'-direction.</text>
</comment>
<comment type="catalytic activity">
    <reaction evidence="1">
        <text>RNA(n+1) + phosphate = RNA(n) + a ribonucleoside 5'-diphosphate</text>
        <dbReference type="Rhea" id="RHEA:22096"/>
        <dbReference type="Rhea" id="RHEA-COMP:14527"/>
        <dbReference type="Rhea" id="RHEA-COMP:17342"/>
        <dbReference type="ChEBI" id="CHEBI:43474"/>
        <dbReference type="ChEBI" id="CHEBI:57930"/>
        <dbReference type="ChEBI" id="CHEBI:140395"/>
        <dbReference type="EC" id="2.7.7.8"/>
    </reaction>
</comment>
<comment type="cofactor">
    <cofactor evidence="1">
        <name>Mg(2+)</name>
        <dbReference type="ChEBI" id="CHEBI:18420"/>
    </cofactor>
</comment>
<comment type="subunit">
    <text evidence="1">Component of the RNA degradosome, which is a multiprotein complex involved in RNA processing and mRNA degradation.</text>
</comment>
<comment type="subcellular location">
    <subcellularLocation>
        <location evidence="1">Cytoplasm</location>
    </subcellularLocation>
</comment>
<comment type="similarity">
    <text evidence="1">Belongs to the polyribonucleotide nucleotidyltransferase family.</text>
</comment>
<comment type="sequence caution" evidence="2">
    <conflict type="erroneous initiation">
        <sequence resource="EMBL-CDS" id="ABI57286"/>
    </conflict>
</comment>
<evidence type="ECO:0000255" key="1">
    <source>
        <dbReference type="HAMAP-Rule" id="MF_01595"/>
    </source>
</evidence>
<evidence type="ECO:0000305" key="2"/>
<organism>
    <name type="scientific">Alkalilimnicola ehrlichii (strain ATCC BAA-1101 / DSM 17681 / MLHE-1)</name>
    <dbReference type="NCBI Taxonomy" id="187272"/>
    <lineage>
        <taxon>Bacteria</taxon>
        <taxon>Pseudomonadati</taxon>
        <taxon>Pseudomonadota</taxon>
        <taxon>Gammaproteobacteria</taxon>
        <taxon>Chromatiales</taxon>
        <taxon>Ectothiorhodospiraceae</taxon>
        <taxon>Alkalilimnicola</taxon>
    </lineage>
</organism>
<name>PNP_ALKEH</name>
<reference key="1">
    <citation type="submission" date="2006-08" db="EMBL/GenBank/DDBJ databases">
        <title>Complete sequence of Alkalilimnicola ehrilichei MLHE-1.</title>
        <authorList>
            <person name="Copeland A."/>
            <person name="Lucas S."/>
            <person name="Lapidus A."/>
            <person name="Barry K."/>
            <person name="Detter J.C."/>
            <person name="Glavina del Rio T."/>
            <person name="Hammon N."/>
            <person name="Israni S."/>
            <person name="Dalin E."/>
            <person name="Tice H."/>
            <person name="Pitluck S."/>
            <person name="Sims D."/>
            <person name="Brettin T."/>
            <person name="Bruce D."/>
            <person name="Han C."/>
            <person name="Tapia R."/>
            <person name="Gilna P."/>
            <person name="Schmutz J."/>
            <person name="Larimer F."/>
            <person name="Land M."/>
            <person name="Hauser L."/>
            <person name="Kyrpides N."/>
            <person name="Mikhailova N."/>
            <person name="Oremland R.S."/>
            <person name="Hoeft S.E."/>
            <person name="Switzer-Blum J."/>
            <person name="Kulp T."/>
            <person name="King G."/>
            <person name="Tabita R."/>
            <person name="Witte B."/>
            <person name="Santini J.M."/>
            <person name="Basu P."/>
            <person name="Hollibaugh J.T."/>
            <person name="Xie G."/>
            <person name="Stolz J.F."/>
            <person name="Richardson P."/>
        </authorList>
    </citation>
    <scope>NUCLEOTIDE SEQUENCE [LARGE SCALE GENOMIC DNA]</scope>
    <source>
        <strain>ATCC BAA-1101 / DSM 17681 / MLHE-1</strain>
    </source>
</reference>
<keyword id="KW-0963">Cytoplasm</keyword>
<keyword id="KW-0460">Magnesium</keyword>
<keyword id="KW-0479">Metal-binding</keyword>
<keyword id="KW-0548">Nucleotidyltransferase</keyword>
<keyword id="KW-1185">Reference proteome</keyword>
<keyword id="KW-0694">RNA-binding</keyword>
<keyword id="KW-0808">Transferase</keyword>
<proteinExistence type="inferred from homology"/>
<sequence length="698" mass="75642">MKSVKKSFQYGNHTVTLETGGVARQADGAVLVNMSDTVVLVTAVGRKEADPGKGFFPLTVNYQERTYAAGKIPGGFFKREGRPSEKETLTCRLIDRPIRPLFPEGFYNEVQVVATVLSMNPEVDADIPALIGASAALSISGIPFDGPIGAARVGYKDGEYLLNPTFEETAASDLDLVVAGTENAVLMVESEANQLPEEAMLGAVLYGHEQMQVAIQAINELTAEAGKPRWDWHPPQGDAALETAIKDLVGDDLAAAYQIPEKQERQNRIGELRQRAVEALGENREEEGGWPEKDVGDAFKGLEKDIVRGRILAGERRIDGRDTRTVRPIDIEVGSLPRTHGSAIFTRGETQAVVVTTLGTGRDAQIIDAIEGERKEQFMLHYNFPPYCVGETGFMGTPKRREIGHGKLAKRGIEAVMPAADDCPYVIRVVSEITESNGSSSMATVCGTSLSLMDAGVPVKAPVAGIAMGLIKEDEQFAVLSDILGDEDHLGDMDFKVAGTESGVTALQMDIKIQGITREIMEQALEQAREGRLHILGEMNNAISGPRSEMSEYAPRLLTIRIDPDKIRDVIGKGGATIRALTEETGTTIDISDDGKVTIASADKAAADEARRRIELLTADVEVGTVYEGKVSKLMDFGAFVNILPGRDGLVHISQISNERVERVGDYLKEGDTVRVKVLEVDRQGRIRLSMKAVQDGE</sequence>
<dbReference type="EC" id="2.7.7.8" evidence="1"/>
<dbReference type="EMBL" id="CP000453">
    <property type="protein sequence ID" value="ABI57286.1"/>
    <property type="status" value="ALT_INIT"/>
    <property type="molecule type" value="Genomic_DNA"/>
</dbReference>
<dbReference type="RefSeq" id="WP_041718014.1">
    <property type="nucleotide sequence ID" value="NC_008340.1"/>
</dbReference>
<dbReference type="SMR" id="Q0A7A1"/>
<dbReference type="KEGG" id="aeh:Mlg_1944"/>
<dbReference type="eggNOG" id="COG1185">
    <property type="taxonomic scope" value="Bacteria"/>
</dbReference>
<dbReference type="HOGENOM" id="CLU_004217_2_2_6"/>
<dbReference type="Proteomes" id="UP000001962">
    <property type="component" value="Chromosome"/>
</dbReference>
<dbReference type="GO" id="GO:0005829">
    <property type="term" value="C:cytosol"/>
    <property type="evidence" value="ECO:0007669"/>
    <property type="project" value="TreeGrafter"/>
</dbReference>
<dbReference type="GO" id="GO:0000175">
    <property type="term" value="F:3'-5'-RNA exonuclease activity"/>
    <property type="evidence" value="ECO:0007669"/>
    <property type="project" value="TreeGrafter"/>
</dbReference>
<dbReference type="GO" id="GO:0000287">
    <property type="term" value="F:magnesium ion binding"/>
    <property type="evidence" value="ECO:0007669"/>
    <property type="project" value="UniProtKB-UniRule"/>
</dbReference>
<dbReference type="GO" id="GO:0004654">
    <property type="term" value="F:polyribonucleotide nucleotidyltransferase activity"/>
    <property type="evidence" value="ECO:0007669"/>
    <property type="project" value="UniProtKB-UniRule"/>
</dbReference>
<dbReference type="GO" id="GO:0003723">
    <property type="term" value="F:RNA binding"/>
    <property type="evidence" value="ECO:0007669"/>
    <property type="project" value="UniProtKB-UniRule"/>
</dbReference>
<dbReference type="GO" id="GO:0006402">
    <property type="term" value="P:mRNA catabolic process"/>
    <property type="evidence" value="ECO:0007669"/>
    <property type="project" value="UniProtKB-UniRule"/>
</dbReference>
<dbReference type="GO" id="GO:0006396">
    <property type="term" value="P:RNA processing"/>
    <property type="evidence" value="ECO:0007669"/>
    <property type="project" value="InterPro"/>
</dbReference>
<dbReference type="CDD" id="cd02393">
    <property type="entry name" value="KH-I_PNPase"/>
    <property type="match status" value="1"/>
</dbReference>
<dbReference type="CDD" id="cd11363">
    <property type="entry name" value="RNase_PH_PNPase_1"/>
    <property type="match status" value="1"/>
</dbReference>
<dbReference type="CDD" id="cd11364">
    <property type="entry name" value="RNase_PH_PNPase_2"/>
    <property type="match status" value="1"/>
</dbReference>
<dbReference type="CDD" id="cd04472">
    <property type="entry name" value="S1_PNPase"/>
    <property type="match status" value="1"/>
</dbReference>
<dbReference type="FunFam" id="2.40.50.140:FF:000023">
    <property type="entry name" value="Polyribonucleotide nucleotidyltransferase"/>
    <property type="match status" value="1"/>
</dbReference>
<dbReference type="FunFam" id="3.30.1370.10:FF:000001">
    <property type="entry name" value="Polyribonucleotide nucleotidyltransferase"/>
    <property type="match status" value="1"/>
</dbReference>
<dbReference type="FunFam" id="3.30.230.70:FF:000001">
    <property type="entry name" value="Polyribonucleotide nucleotidyltransferase"/>
    <property type="match status" value="1"/>
</dbReference>
<dbReference type="FunFam" id="3.30.230.70:FF:000002">
    <property type="entry name" value="Polyribonucleotide nucleotidyltransferase"/>
    <property type="match status" value="1"/>
</dbReference>
<dbReference type="Gene3D" id="3.30.230.70">
    <property type="entry name" value="GHMP Kinase, N-terminal domain"/>
    <property type="match status" value="2"/>
</dbReference>
<dbReference type="Gene3D" id="3.30.1370.10">
    <property type="entry name" value="K Homology domain, type 1"/>
    <property type="match status" value="1"/>
</dbReference>
<dbReference type="Gene3D" id="2.40.50.140">
    <property type="entry name" value="Nucleic acid-binding proteins"/>
    <property type="match status" value="1"/>
</dbReference>
<dbReference type="HAMAP" id="MF_01595">
    <property type="entry name" value="PNPase"/>
    <property type="match status" value="1"/>
</dbReference>
<dbReference type="InterPro" id="IPR001247">
    <property type="entry name" value="ExoRNase_PH_dom1"/>
</dbReference>
<dbReference type="InterPro" id="IPR015847">
    <property type="entry name" value="ExoRNase_PH_dom2"/>
</dbReference>
<dbReference type="InterPro" id="IPR036345">
    <property type="entry name" value="ExoRNase_PH_dom2_sf"/>
</dbReference>
<dbReference type="InterPro" id="IPR004087">
    <property type="entry name" value="KH_dom"/>
</dbReference>
<dbReference type="InterPro" id="IPR004088">
    <property type="entry name" value="KH_dom_type_1"/>
</dbReference>
<dbReference type="InterPro" id="IPR036612">
    <property type="entry name" value="KH_dom_type_1_sf"/>
</dbReference>
<dbReference type="InterPro" id="IPR012340">
    <property type="entry name" value="NA-bd_OB-fold"/>
</dbReference>
<dbReference type="InterPro" id="IPR012162">
    <property type="entry name" value="PNPase"/>
</dbReference>
<dbReference type="InterPro" id="IPR027408">
    <property type="entry name" value="PNPase/RNase_PH_dom_sf"/>
</dbReference>
<dbReference type="InterPro" id="IPR015848">
    <property type="entry name" value="PNPase_PH_RNA-bd_bac/org-type"/>
</dbReference>
<dbReference type="InterPro" id="IPR036456">
    <property type="entry name" value="PNPase_PH_RNA-bd_sf"/>
</dbReference>
<dbReference type="InterPro" id="IPR020568">
    <property type="entry name" value="Ribosomal_Su5_D2-typ_SF"/>
</dbReference>
<dbReference type="InterPro" id="IPR003029">
    <property type="entry name" value="S1_domain"/>
</dbReference>
<dbReference type="NCBIfam" id="TIGR03591">
    <property type="entry name" value="polynuc_phos"/>
    <property type="match status" value="1"/>
</dbReference>
<dbReference type="NCBIfam" id="NF008805">
    <property type="entry name" value="PRK11824.1"/>
    <property type="match status" value="1"/>
</dbReference>
<dbReference type="PANTHER" id="PTHR11252">
    <property type="entry name" value="POLYRIBONUCLEOTIDE NUCLEOTIDYLTRANSFERASE"/>
    <property type="match status" value="1"/>
</dbReference>
<dbReference type="PANTHER" id="PTHR11252:SF0">
    <property type="entry name" value="POLYRIBONUCLEOTIDE NUCLEOTIDYLTRANSFERASE 1, MITOCHONDRIAL"/>
    <property type="match status" value="1"/>
</dbReference>
<dbReference type="Pfam" id="PF00013">
    <property type="entry name" value="KH_1"/>
    <property type="match status" value="1"/>
</dbReference>
<dbReference type="Pfam" id="PF03726">
    <property type="entry name" value="PNPase"/>
    <property type="match status" value="1"/>
</dbReference>
<dbReference type="Pfam" id="PF01138">
    <property type="entry name" value="RNase_PH"/>
    <property type="match status" value="2"/>
</dbReference>
<dbReference type="Pfam" id="PF03725">
    <property type="entry name" value="RNase_PH_C"/>
    <property type="match status" value="2"/>
</dbReference>
<dbReference type="Pfam" id="PF00575">
    <property type="entry name" value="S1"/>
    <property type="match status" value="1"/>
</dbReference>
<dbReference type="PIRSF" id="PIRSF005499">
    <property type="entry name" value="PNPase"/>
    <property type="match status" value="1"/>
</dbReference>
<dbReference type="SMART" id="SM00322">
    <property type="entry name" value="KH"/>
    <property type="match status" value="1"/>
</dbReference>
<dbReference type="SMART" id="SM00316">
    <property type="entry name" value="S1"/>
    <property type="match status" value="1"/>
</dbReference>
<dbReference type="SUPFAM" id="SSF54791">
    <property type="entry name" value="Eukaryotic type KH-domain (KH-domain type I)"/>
    <property type="match status" value="1"/>
</dbReference>
<dbReference type="SUPFAM" id="SSF50249">
    <property type="entry name" value="Nucleic acid-binding proteins"/>
    <property type="match status" value="1"/>
</dbReference>
<dbReference type="SUPFAM" id="SSF46915">
    <property type="entry name" value="Polynucleotide phosphorylase/guanosine pentaphosphate synthase (PNPase/GPSI), domain 3"/>
    <property type="match status" value="1"/>
</dbReference>
<dbReference type="SUPFAM" id="SSF55666">
    <property type="entry name" value="Ribonuclease PH domain 2-like"/>
    <property type="match status" value="2"/>
</dbReference>
<dbReference type="SUPFAM" id="SSF54211">
    <property type="entry name" value="Ribosomal protein S5 domain 2-like"/>
    <property type="match status" value="2"/>
</dbReference>
<dbReference type="PROSITE" id="PS50084">
    <property type="entry name" value="KH_TYPE_1"/>
    <property type="match status" value="1"/>
</dbReference>
<dbReference type="PROSITE" id="PS50126">
    <property type="entry name" value="S1"/>
    <property type="match status" value="1"/>
</dbReference>